<evidence type="ECO:0000250" key="1"/>
<evidence type="ECO:0000255" key="2"/>
<evidence type="ECO:0000255" key="3">
    <source>
        <dbReference type="PROSITE-ProRule" id="PRU00068"/>
    </source>
</evidence>
<evidence type="ECO:0000255" key="4">
    <source>
        <dbReference type="PROSITE-ProRule" id="PRU00276"/>
    </source>
</evidence>
<evidence type="ECO:0000305" key="5"/>
<reference key="1">
    <citation type="journal article" date="2011" name="Toxicon">
        <title>A high-throughput venom-gland transcriptome for the eastern diamondback rattlesnake (Crotalus adamanteus) and evidence for pervasive positive selection across toxin classes.</title>
        <authorList>
            <person name="Rokyta D.R."/>
            <person name="Wray K.P."/>
            <person name="Lemmon A.R."/>
            <person name="Lemmon E.M."/>
            <person name="Caudle S.B."/>
        </authorList>
    </citation>
    <scope>NUCLEOTIDE SEQUENCE</scope>
    <source>
        <tissue>Venom gland</tissue>
    </source>
</reference>
<reference key="2">
    <citation type="journal article" date="2012" name="BMC Genomics">
        <title>The venom-gland transcriptome of the eastern diamondback rattlesnake (Crotalus adamanteus).</title>
        <authorList>
            <person name="Rokyta D.R."/>
            <person name="Lemmon A.R."/>
            <person name="Margres M.J."/>
            <person name="Aronow K."/>
        </authorList>
    </citation>
    <scope>NUCLEOTIDE SEQUENCE [MRNA]</scope>
    <source>
        <tissue>Venom gland</tissue>
    </source>
</reference>
<reference key="3">
    <citation type="journal article" date="2014" name="J. Proteomics">
        <title>Linking the transcriptome and proteome to characterize the venom of the eastern diamondback rattlesnake (Crotalus adamanteus).</title>
        <authorList>
            <person name="Margres M.J."/>
            <person name="McGivern J.J."/>
            <person name="Wray K.P."/>
            <person name="Seavy M."/>
            <person name="Calvin K."/>
            <person name="Rokyta D.R."/>
        </authorList>
    </citation>
    <scope>PROTEIN SEQUENCE OF 275-281 AND 596-608</scope>
    <scope>IDENTIFICATION BY MASS SPECTROMETRY</scope>
    <source>
        <tissue>Venom</tissue>
    </source>
</reference>
<accession>F8S108</accession>
<keyword id="KW-0106">Calcium</keyword>
<keyword id="KW-1217">Cell adhesion impairing toxin</keyword>
<keyword id="KW-0903">Direct protein sequencing</keyword>
<keyword id="KW-1015">Disulfide bond</keyword>
<keyword id="KW-0325">Glycoprotein</keyword>
<keyword id="KW-1199">Hemostasis impairing toxin</keyword>
<keyword id="KW-0378">Hydrolase</keyword>
<keyword id="KW-0479">Metal-binding</keyword>
<keyword id="KW-0482">Metalloprotease</keyword>
<keyword id="KW-0645">Protease</keyword>
<keyword id="KW-0964">Secreted</keyword>
<keyword id="KW-0732">Signal</keyword>
<keyword id="KW-0800">Toxin</keyword>
<keyword id="KW-0862">Zinc</keyword>
<keyword id="KW-0865">Zymogen</keyword>
<organism>
    <name type="scientific">Crotalus adamanteus</name>
    <name type="common">Eastern diamondback rattlesnake</name>
    <dbReference type="NCBI Taxonomy" id="8729"/>
    <lineage>
        <taxon>Eukaryota</taxon>
        <taxon>Metazoa</taxon>
        <taxon>Chordata</taxon>
        <taxon>Craniata</taxon>
        <taxon>Vertebrata</taxon>
        <taxon>Euteleostomi</taxon>
        <taxon>Lepidosauria</taxon>
        <taxon>Squamata</taxon>
        <taxon>Bifurcata</taxon>
        <taxon>Unidentata</taxon>
        <taxon>Episquamata</taxon>
        <taxon>Toxicofera</taxon>
        <taxon>Serpentes</taxon>
        <taxon>Colubroidea</taxon>
        <taxon>Viperidae</taxon>
        <taxon>Crotalinae</taxon>
        <taxon>Crotalus</taxon>
    </lineage>
</organism>
<proteinExistence type="evidence at protein level"/>
<sequence length="610" mass="67910">MIQVLLVTISLAVFPYQGSSVILESGNVNDYEVVYPRKVTALPKGAVQPKYEDTMQYEFKVNGEPVVLHLEKNKGLFSEDYSETHYSPDGREITTYPTVEDHCYYHGRIENDADSTASISACNGLKGHFKLQGEMYLIEPLKLPDSEAHAVFKYENVEKEDEAPKMCGVTQNWESYEPIKKASQSNLTPEQQRYLNAKKYVKLFLVADYIMYLKYGRNLTAVRTRMYDIVNVITPIYHRMNIHVALVGLEIWSNTDKIIVQSSADVTLNLFGNWRATDLLRRKSHDNAQLLTGINFNGPTAGLAYLGGICNTMYSAGIVQDHSKIHHLVAIAMAHEMGHNLGMDHDKDTCTCGTRPCVMAGALSCEASFLFSDCSQKDHREFLIKNMPQCILKKPLKTDVVSPAVCGNYFVEVGEECDCGSPRTCRDPCCDATTCKLRQGAQCAEGLCCDQCRFKGAGTECRAAKDECDMADVCTGRSAECTDSFQRNGQPCKNNNGYCYNGKCPIMADQCIALFGPSATVSQDACFQFNREGNHYGYCRKEQNTKIACEPQDVKCGRLYCFPNSPENKNPCNIYYSPNDEDKGMVLPGTKCADGKACSNGQCVDVTTPY</sequence>
<feature type="signal peptide" evidence="2">
    <location>
        <begin position="1"/>
        <end position="20"/>
    </location>
</feature>
<feature type="propeptide" id="PRO_0000425629" evidence="1">
    <location>
        <begin position="21"/>
        <end position="189"/>
    </location>
</feature>
<feature type="chain" id="PRO_5000771377" description="Zinc metalloproteinase-disintegrin-like 4a">
    <location>
        <begin position="190"/>
        <end position="610"/>
    </location>
</feature>
<feature type="domain" description="Peptidase M12B" evidence="4">
    <location>
        <begin position="199"/>
        <end position="395"/>
    </location>
</feature>
<feature type="domain" description="Disintegrin" evidence="3">
    <location>
        <begin position="403"/>
        <end position="488"/>
    </location>
</feature>
<feature type="short sequence motif" description="D/ECD-tripeptide">
    <location>
        <begin position="467"/>
        <end position="469"/>
    </location>
</feature>
<feature type="active site" evidence="4">
    <location>
        <position position="336"/>
    </location>
</feature>
<feature type="binding site" evidence="1">
    <location>
        <position position="286"/>
    </location>
    <ligand>
        <name>Ca(2+)</name>
        <dbReference type="ChEBI" id="CHEBI:29108"/>
        <label>1</label>
    </ligand>
</feature>
<feature type="binding site" evidence="4">
    <location>
        <position position="335"/>
    </location>
    <ligand>
        <name>Zn(2+)</name>
        <dbReference type="ChEBI" id="CHEBI:29105"/>
        <note>catalytic</note>
    </ligand>
</feature>
<feature type="binding site" evidence="4">
    <location>
        <position position="339"/>
    </location>
    <ligand>
        <name>Zn(2+)</name>
        <dbReference type="ChEBI" id="CHEBI:29105"/>
        <note>catalytic</note>
    </ligand>
</feature>
<feature type="binding site" evidence="4">
    <location>
        <position position="345"/>
    </location>
    <ligand>
        <name>Zn(2+)</name>
        <dbReference type="ChEBI" id="CHEBI:29105"/>
        <note>catalytic</note>
    </ligand>
</feature>
<feature type="binding site" evidence="1">
    <location>
        <position position="390"/>
    </location>
    <ligand>
        <name>Ca(2+)</name>
        <dbReference type="ChEBI" id="CHEBI:29108"/>
        <label>1</label>
    </ligand>
</feature>
<feature type="binding site" evidence="1">
    <location>
        <position position="405"/>
    </location>
    <ligand>
        <name>Ca(2+)</name>
        <dbReference type="ChEBI" id="CHEBI:29108"/>
        <label>2</label>
    </ligand>
</feature>
<feature type="binding site" evidence="1">
    <location>
        <position position="408"/>
    </location>
    <ligand>
        <name>Ca(2+)</name>
        <dbReference type="ChEBI" id="CHEBI:29108"/>
        <label>2</label>
    </ligand>
</feature>
<feature type="binding site" evidence="1">
    <location>
        <position position="410"/>
    </location>
    <ligand>
        <name>Ca(2+)</name>
        <dbReference type="ChEBI" id="CHEBI:29108"/>
        <label>2</label>
    </ligand>
</feature>
<feature type="binding site" evidence="1">
    <location>
        <position position="412"/>
    </location>
    <ligand>
        <name>Ca(2+)</name>
        <dbReference type="ChEBI" id="CHEBI:29108"/>
        <label>2</label>
    </ligand>
</feature>
<feature type="binding site" evidence="1">
    <location>
        <position position="415"/>
    </location>
    <ligand>
        <name>Ca(2+)</name>
        <dbReference type="ChEBI" id="CHEBI:29108"/>
        <label>2</label>
    </ligand>
</feature>
<feature type="binding site" evidence="1">
    <location>
        <position position="418"/>
    </location>
    <ligand>
        <name>Ca(2+)</name>
        <dbReference type="ChEBI" id="CHEBI:29108"/>
        <label>2</label>
    </ligand>
</feature>
<feature type="glycosylation site" description="N-linked (GlcNAc...) asparagine" evidence="2">
    <location>
        <position position="218"/>
    </location>
</feature>
<feature type="disulfide bond" evidence="1">
    <location>
        <begin position="310"/>
        <end position="390"/>
    </location>
</feature>
<feature type="disulfide bond" evidence="1">
    <location>
        <begin position="350"/>
        <end position="374"/>
    </location>
</feature>
<feature type="disulfide bond" evidence="1">
    <location>
        <begin position="352"/>
        <end position="357"/>
    </location>
</feature>
<feature type="disulfide bond" evidence="1">
    <location>
        <begin position="406"/>
        <end position="435"/>
    </location>
</feature>
<feature type="disulfide bond" evidence="1">
    <location>
        <begin position="417"/>
        <end position="430"/>
    </location>
</feature>
<feature type="disulfide bond" evidence="1">
    <location>
        <begin position="419"/>
        <end position="425"/>
    </location>
</feature>
<feature type="disulfide bond" evidence="1">
    <location>
        <begin position="429"/>
        <end position="452"/>
    </location>
</feature>
<feature type="disulfide bond" evidence="1">
    <location>
        <begin position="443"/>
        <end position="449"/>
    </location>
</feature>
<feature type="disulfide bond" evidence="1">
    <location>
        <begin position="448"/>
        <end position="474"/>
    </location>
</feature>
<feature type="disulfide bond" evidence="1">
    <location>
        <begin position="461"/>
        <end position="481"/>
    </location>
</feature>
<feature type="disulfide bond" evidence="1">
    <location>
        <begin position="468"/>
        <end position="499"/>
    </location>
</feature>
<feature type="disulfide bond" evidence="1">
    <location>
        <begin position="492"/>
        <end position="504"/>
    </location>
</feature>
<feature type="disulfide bond" evidence="1">
    <location>
        <begin position="511"/>
        <end position="561"/>
    </location>
</feature>
<feature type="disulfide bond" evidence="1">
    <location>
        <begin position="526"/>
        <end position="572"/>
    </location>
</feature>
<feature type="disulfide bond" evidence="1">
    <location>
        <begin position="539"/>
        <end position="549"/>
    </location>
</feature>
<feature type="disulfide bond" evidence="1">
    <location>
        <begin position="556"/>
        <end position="598"/>
    </location>
</feature>
<feature type="disulfide bond" evidence="1">
    <location>
        <begin position="592"/>
        <end position="603"/>
    </location>
</feature>
<protein>
    <recommendedName>
        <fullName>Zinc metalloproteinase-disintegrin-like 4a</fullName>
        <ecNumber>3.4.24.-</ecNumber>
    </recommendedName>
    <alternativeName>
        <fullName>Snake venom metalloproteinase 7</fullName>
        <shortName>SVMP</shortName>
    </alternativeName>
</protein>
<dbReference type="EC" id="3.4.24.-"/>
<dbReference type="EMBL" id="HQ414112">
    <property type="protein sequence ID" value="AEJ31990.1"/>
    <property type="molecule type" value="mRNA"/>
</dbReference>
<dbReference type="EMBL" id="JU173715">
    <property type="protein sequence ID" value="AFJ49241.1"/>
    <property type="molecule type" value="mRNA"/>
</dbReference>
<dbReference type="SMR" id="F8S108"/>
<dbReference type="MEROPS" id="M12.186"/>
<dbReference type="GO" id="GO:0005576">
    <property type="term" value="C:extracellular region"/>
    <property type="evidence" value="ECO:0007669"/>
    <property type="project" value="UniProtKB-SubCell"/>
</dbReference>
<dbReference type="GO" id="GO:0005886">
    <property type="term" value="C:plasma membrane"/>
    <property type="evidence" value="ECO:0007669"/>
    <property type="project" value="TreeGrafter"/>
</dbReference>
<dbReference type="GO" id="GO:0046872">
    <property type="term" value="F:metal ion binding"/>
    <property type="evidence" value="ECO:0007669"/>
    <property type="project" value="UniProtKB-KW"/>
</dbReference>
<dbReference type="GO" id="GO:0004222">
    <property type="term" value="F:metalloendopeptidase activity"/>
    <property type="evidence" value="ECO:0007669"/>
    <property type="project" value="InterPro"/>
</dbReference>
<dbReference type="GO" id="GO:0090729">
    <property type="term" value="F:toxin activity"/>
    <property type="evidence" value="ECO:0007669"/>
    <property type="project" value="UniProtKB-KW"/>
</dbReference>
<dbReference type="GO" id="GO:0006508">
    <property type="term" value="P:proteolysis"/>
    <property type="evidence" value="ECO:0007669"/>
    <property type="project" value="UniProtKB-KW"/>
</dbReference>
<dbReference type="CDD" id="cd04269">
    <property type="entry name" value="ZnMc_adamalysin_II_like"/>
    <property type="match status" value="1"/>
</dbReference>
<dbReference type="FunFam" id="3.40.390.10:FF:000002">
    <property type="entry name" value="Disintegrin and metalloproteinase domain-containing protein 22"/>
    <property type="match status" value="1"/>
</dbReference>
<dbReference type="FunFam" id="4.10.70.10:FF:000001">
    <property type="entry name" value="Disintegrin and metalloproteinase domain-containing protein 22"/>
    <property type="match status" value="1"/>
</dbReference>
<dbReference type="Gene3D" id="3.40.390.10">
    <property type="entry name" value="Collagenase (Catalytic Domain)"/>
    <property type="match status" value="1"/>
</dbReference>
<dbReference type="Gene3D" id="4.10.70.10">
    <property type="entry name" value="Disintegrin domain"/>
    <property type="match status" value="1"/>
</dbReference>
<dbReference type="InterPro" id="IPR006586">
    <property type="entry name" value="ADAM_Cys-rich"/>
</dbReference>
<dbReference type="InterPro" id="IPR018358">
    <property type="entry name" value="Disintegrin_CS"/>
</dbReference>
<dbReference type="InterPro" id="IPR001762">
    <property type="entry name" value="Disintegrin_dom"/>
</dbReference>
<dbReference type="InterPro" id="IPR036436">
    <property type="entry name" value="Disintegrin_dom_sf"/>
</dbReference>
<dbReference type="InterPro" id="IPR024079">
    <property type="entry name" value="MetalloPept_cat_dom_sf"/>
</dbReference>
<dbReference type="InterPro" id="IPR001590">
    <property type="entry name" value="Peptidase_M12B"/>
</dbReference>
<dbReference type="InterPro" id="IPR002870">
    <property type="entry name" value="Peptidase_M12B_N"/>
</dbReference>
<dbReference type="InterPro" id="IPR034027">
    <property type="entry name" value="Reprolysin_adamalysin"/>
</dbReference>
<dbReference type="PANTHER" id="PTHR11905">
    <property type="entry name" value="ADAM A DISINTEGRIN AND METALLOPROTEASE DOMAIN"/>
    <property type="match status" value="1"/>
</dbReference>
<dbReference type="PANTHER" id="PTHR11905:SF32">
    <property type="entry name" value="DISINTEGRIN AND METALLOPROTEINASE DOMAIN-CONTAINING PROTEIN 28"/>
    <property type="match status" value="1"/>
</dbReference>
<dbReference type="Pfam" id="PF08516">
    <property type="entry name" value="ADAM_CR"/>
    <property type="match status" value="1"/>
</dbReference>
<dbReference type="Pfam" id="PF00200">
    <property type="entry name" value="Disintegrin"/>
    <property type="match status" value="1"/>
</dbReference>
<dbReference type="Pfam" id="PF01562">
    <property type="entry name" value="Pep_M12B_propep"/>
    <property type="match status" value="1"/>
</dbReference>
<dbReference type="Pfam" id="PF01421">
    <property type="entry name" value="Reprolysin"/>
    <property type="match status" value="1"/>
</dbReference>
<dbReference type="PRINTS" id="PR00289">
    <property type="entry name" value="DISINTEGRIN"/>
</dbReference>
<dbReference type="SMART" id="SM00608">
    <property type="entry name" value="ACR"/>
    <property type="match status" value="1"/>
</dbReference>
<dbReference type="SMART" id="SM00050">
    <property type="entry name" value="DISIN"/>
    <property type="match status" value="1"/>
</dbReference>
<dbReference type="SUPFAM" id="SSF57552">
    <property type="entry name" value="Blood coagulation inhibitor (disintegrin)"/>
    <property type="match status" value="1"/>
</dbReference>
<dbReference type="SUPFAM" id="SSF55486">
    <property type="entry name" value="Metalloproteases ('zincins'), catalytic domain"/>
    <property type="match status" value="1"/>
</dbReference>
<dbReference type="PROSITE" id="PS50215">
    <property type="entry name" value="ADAM_MEPRO"/>
    <property type="match status" value="1"/>
</dbReference>
<dbReference type="PROSITE" id="PS00427">
    <property type="entry name" value="DISINTEGRIN_1"/>
    <property type="match status" value="1"/>
</dbReference>
<dbReference type="PROSITE" id="PS50214">
    <property type="entry name" value="DISINTEGRIN_2"/>
    <property type="match status" value="1"/>
</dbReference>
<dbReference type="PROSITE" id="PS00142">
    <property type="entry name" value="ZINC_PROTEASE"/>
    <property type="match status" value="1"/>
</dbReference>
<comment type="function">
    <text evidence="1">Snake venom metalloproteinase that impairs hemostasis in the envenomed animal.</text>
</comment>
<comment type="cofactor">
    <cofactor evidence="1">
        <name>Zn(2+)</name>
        <dbReference type="ChEBI" id="CHEBI:29105"/>
    </cofactor>
    <text evidence="1">Binds 1 zinc ion per subunit.</text>
</comment>
<comment type="subcellular location">
    <subcellularLocation>
        <location>Secreted</location>
    </subcellularLocation>
</comment>
<comment type="tissue specificity">
    <text>Expressed by the venom gland.</text>
</comment>
<comment type="miscellaneous">
    <text>The disintegrin domain belongs to the long disintegrin subfamily.</text>
</comment>
<comment type="similarity">
    <text evidence="5">Belongs to the venom metalloproteinase (M12B) family. P-III subfamily.</text>
</comment>
<name>VM34_CROAD</name>